<dbReference type="EC" id="2.1.2.9" evidence="2"/>
<dbReference type="EMBL" id="AE005174">
    <property type="protein sequence ID" value="AAG58409.1"/>
    <property type="molecule type" value="Genomic_DNA"/>
</dbReference>
<dbReference type="EMBL" id="BA000007">
    <property type="protein sequence ID" value="BAB37576.1"/>
    <property type="molecule type" value="Genomic_DNA"/>
</dbReference>
<dbReference type="PIR" id="A91148">
    <property type="entry name" value="A91148"/>
</dbReference>
<dbReference type="PIR" id="E85993">
    <property type="entry name" value="E85993"/>
</dbReference>
<dbReference type="RefSeq" id="NP_312180.1">
    <property type="nucleotide sequence ID" value="NC_002695.1"/>
</dbReference>
<dbReference type="RefSeq" id="WP_000004459.1">
    <property type="nucleotide sequence ID" value="NZ_VOAI01000041.1"/>
</dbReference>
<dbReference type="SMR" id="Q8X8F1"/>
<dbReference type="STRING" id="155864.Z4658"/>
<dbReference type="GeneID" id="75173458"/>
<dbReference type="GeneID" id="915992"/>
<dbReference type="KEGG" id="ece:Z4658"/>
<dbReference type="KEGG" id="ecs:ECs_4153"/>
<dbReference type="PATRIC" id="fig|386585.9.peg.4336"/>
<dbReference type="eggNOG" id="COG0223">
    <property type="taxonomic scope" value="Bacteria"/>
</dbReference>
<dbReference type="HOGENOM" id="CLU_033347_1_2_6"/>
<dbReference type="OMA" id="GITTMLM"/>
<dbReference type="Proteomes" id="UP000000558">
    <property type="component" value="Chromosome"/>
</dbReference>
<dbReference type="Proteomes" id="UP000002519">
    <property type="component" value="Chromosome"/>
</dbReference>
<dbReference type="GO" id="GO:0005829">
    <property type="term" value="C:cytosol"/>
    <property type="evidence" value="ECO:0007669"/>
    <property type="project" value="TreeGrafter"/>
</dbReference>
<dbReference type="GO" id="GO:0004479">
    <property type="term" value="F:methionyl-tRNA formyltransferase activity"/>
    <property type="evidence" value="ECO:0007669"/>
    <property type="project" value="UniProtKB-UniRule"/>
</dbReference>
<dbReference type="CDD" id="cd08646">
    <property type="entry name" value="FMT_core_Met-tRNA-FMT_N"/>
    <property type="match status" value="1"/>
</dbReference>
<dbReference type="CDD" id="cd08704">
    <property type="entry name" value="Met_tRNA_FMT_C"/>
    <property type="match status" value="1"/>
</dbReference>
<dbReference type="FunFam" id="3.10.25.10:FF:000001">
    <property type="entry name" value="Methionyl-tRNA formyltransferase"/>
    <property type="match status" value="1"/>
</dbReference>
<dbReference type="FunFam" id="3.40.50.170:FF:000003">
    <property type="entry name" value="Methionyl-tRNA formyltransferase"/>
    <property type="match status" value="1"/>
</dbReference>
<dbReference type="Gene3D" id="3.10.25.10">
    <property type="entry name" value="Formyl transferase, C-terminal domain"/>
    <property type="match status" value="1"/>
</dbReference>
<dbReference type="Gene3D" id="3.40.50.170">
    <property type="entry name" value="Formyl transferase, N-terminal domain"/>
    <property type="match status" value="1"/>
</dbReference>
<dbReference type="HAMAP" id="MF_00182">
    <property type="entry name" value="Formyl_trans"/>
    <property type="match status" value="1"/>
</dbReference>
<dbReference type="InterPro" id="IPR005794">
    <property type="entry name" value="Fmt"/>
</dbReference>
<dbReference type="InterPro" id="IPR005793">
    <property type="entry name" value="Formyl_trans_C"/>
</dbReference>
<dbReference type="InterPro" id="IPR037022">
    <property type="entry name" value="Formyl_trans_C_sf"/>
</dbReference>
<dbReference type="InterPro" id="IPR002376">
    <property type="entry name" value="Formyl_transf_N"/>
</dbReference>
<dbReference type="InterPro" id="IPR036477">
    <property type="entry name" value="Formyl_transf_N_sf"/>
</dbReference>
<dbReference type="InterPro" id="IPR011034">
    <property type="entry name" value="Formyl_transferase-like_C_sf"/>
</dbReference>
<dbReference type="InterPro" id="IPR001555">
    <property type="entry name" value="GART_AS"/>
</dbReference>
<dbReference type="InterPro" id="IPR044135">
    <property type="entry name" value="Met-tRNA-FMT_C"/>
</dbReference>
<dbReference type="InterPro" id="IPR041711">
    <property type="entry name" value="Met-tRNA-FMT_N"/>
</dbReference>
<dbReference type="NCBIfam" id="TIGR00460">
    <property type="entry name" value="fmt"/>
    <property type="match status" value="1"/>
</dbReference>
<dbReference type="PANTHER" id="PTHR11138">
    <property type="entry name" value="METHIONYL-TRNA FORMYLTRANSFERASE"/>
    <property type="match status" value="1"/>
</dbReference>
<dbReference type="PANTHER" id="PTHR11138:SF5">
    <property type="entry name" value="METHIONYL-TRNA FORMYLTRANSFERASE, MITOCHONDRIAL"/>
    <property type="match status" value="1"/>
</dbReference>
<dbReference type="Pfam" id="PF02911">
    <property type="entry name" value="Formyl_trans_C"/>
    <property type="match status" value="1"/>
</dbReference>
<dbReference type="Pfam" id="PF00551">
    <property type="entry name" value="Formyl_trans_N"/>
    <property type="match status" value="1"/>
</dbReference>
<dbReference type="SUPFAM" id="SSF50486">
    <property type="entry name" value="FMT C-terminal domain-like"/>
    <property type="match status" value="1"/>
</dbReference>
<dbReference type="SUPFAM" id="SSF53328">
    <property type="entry name" value="Formyltransferase"/>
    <property type="match status" value="1"/>
</dbReference>
<dbReference type="PROSITE" id="PS00373">
    <property type="entry name" value="GART"/>
    <property type="match status" value="1"/>
</dbReference>
<protein>
    <recommendedName>
        <fullName evidence="2">Methionyl-tRNA formyltransferase</fullName>
        <ecNumber evidence="2">2.1.2.9</ecNumber>
    </recommendedName>
</protein>
<proteinExistence type="inferred from homology"/>
<reference key="1">
    <citation type="journal article" date="2001" name="Nature">
        <title>Genome sequence of enterohaemorrhagic Escherichia coli O157:H7.</title>
        <authorList>
            <person name="Perna N.T."/>
            <person name="Plunkett G. III"/>
            <person name="Burland V."/>
            <person name="Mau B."/>
            <person name="Glasner J.D."/>
            <person name="Rose D.J."/>
            <person name="Mayhew G.F."/>
            <person name="Evans P.S."/>
            <person name="Gregor J."/>
            <person name="Kirkpatrick H.A."/>
            <person name="Posfai G."/>
            <person name="Hackett J."/>
            <person name="Klink S."/>
            <person name="Boutin A."/>
            <person name="Shao Y."/>
            <person name="Miller L."/>
            <person name="Grotbeck E.J."/>
            <person name="Davis N.W."/>
            <person name="Lim A."/>
            <person name="Dimalanta E.T."/>
            <person name="Potamousis K."/>
            <person name="Apodaca J."/>
            <person name="Anantharaman T.S."/>
            <person name="Lin J."/>
            <person name="Yen G."/>
            <person name="Schwartz D.C."/>
            <person name="Welch R.A."/>
            <person name="Blattner F.R."/>
        </authorList>
    </citation>
    <scope>NUCLEOTIDE SEQUENCE [LARGE SCALE GENOMIC DNA]</scope>
    <source>
        <strain>O157:H7 / EDL933 / ATCC 700927 / EHEC</strain>
    </source>
</reference>
<reference key="2">
    <citation type="journal article" date="2001" name="DNA Res.">
        <title>Complete genome sequence of enterohemorrhagic Escherichia coli O157:H7 and genomic comparison with a laboratory strain K-12.</title>
        <authorList>
            <person name="Hayashi T."/>
            <person name="Makino K."/>
            <person name="Ohnishi M."/>
            <person name="Kurokawa K."/>
            <person name="Ishii K."/>
            <person name="Yokoyama K."/>
            <person name="Han C.-G."/>
            <person name="Ohtsubo E."/>
            <person name="Nakayama K."/>
            <person name="Murata T."/>
            <person name="Tanaka M."/>
            <person name="Tobe T."/>
            <person name="Iida T."/>
            <person name="Takami H."/>
            <person name="Honda T."/>
            <person name="Sasakawa C."/>
            <person name="Ogasawara N."/>
            <person name="Yasunaga T."/>
            <person name="Kuhara S."/>
            <person name="Shiba T."/>
            <person name="Hattori M."/>
            <person name="Shinagawa H."/>
        </authorList>
    </citation>
    <scope>NUCLEOTIDE SEQUENCE [LARGE SCALE GENOMIC DNA]</scope>
    <source>
        <strain>O157:H7 / Sakai / RIMD 0509952 / EHEC</strain>
    </source>
</reference>
<gene>
    <name evidence="2" type="primary">fmt</name>
    <name type="ordered locus">Z4658</name>
    <name type="ordered locus">ECs4153</name>
</gene>
<sequence>MSESLRIIFAGTPDFAARHLDALLSSGHNVVGVFTQPDRPAGRGKKLMPSPVKVLAEEKGLPVFQPVSLRPQENQQLVADLQADVMVVVAYGLILPKAVLEMPRLGCINVHGSLLPRWRGAAPIQRSLWAGDAETGVTIMQMDVGLDTGDMLYKLSCPITAEDTSGTLYDKLAELGPQGLITTLKQLADGTAKPEVQDETLVTYAEKLSKEEARIDWSLSAAQLERCIRAFNPWPMSWVEIEGQPVKVWKASVIDTATNAAPGTILEANKQGIQVATGDGILNLLSLQPAGKKAMSAQDLLNSRREWFVPGNRLV</sequence>
<name>FMT_ECO57</name>
<accession>Q8X8F1</accession>
<organism>
    <name type="scientific">Escherichia coli O157:H7</name>
    <dbReference type="NCBI Taxonomy" id="83334"/>
    <lineage>
        <taxon>Bacteria</taxon>
        <taxon>Pseudomonadati</taxon>
        <taxon>Pseudomonadota</taxon>
        <taxon>Gammaproteobacteria</taxon>
        <taxon>Enterobacterales</taxon>
        <taxon>Enterobacteriaceae</taxon>
        <taxon>Escherichia</taxon>
    </lineage>
</organism>
<comment type="function">
    <text evidence="2">Attaches a formyl group to the free amino group of methionyl-tRNA(fMet). The formyl group appears to play a dual role in the initiator identity of N-formylmethionyl-tRNA by promoting its recognition by IF2 and preventing the misappropriation of this tRNA by the elongation apparatus.</text>
</comment>
<comment type="catalytic activity">
    <reaction evidence="2">
        <text>L-methionyl-tRNA(fMet) + (6R)-10-formyltetrahydrofolate = N-formyl-L-methionyl-tRNA(fMet) + (6S)-5,6,7,8-tetrahydrofolate + H(+)</text>
        <dbReference type="Rhea" id="RHEA:24380"/>
        <dbReference type="Rhea" id="RHEA-COMP:9952"/>
        <dbReference type="Rhea" id="RHEA-COMP:9953"/>
        <dbReference type="ChEBI" id="CHEBI:15378"/>
        <dbReference type="ChEBI" id="CHEBI:57453"/>
        <dbReference type="ChEBI" id="CHEBI:78530"/>
        <dbReference type="ChEBI" id="CHEBI:78844"/>
        <dbReference type="ChEBI" id="CHEBI:195366"/>
        <dbReference type="EC" id="2.1.2.9"/>
    </reaction>
</comment>
<comment type="domain">
    <text>Composed of an N- and a C-terminal domain. The N-terminal domain carries the tetrahydrofolate (THF)-binding site and the C-terminal domain is presumably involved in positioning the Met-tRNA substrate for the formylation reaction.</text>
</comment>
<comment type="similarity">
    <text evidence="2">Belongs to the Fmt family.</text>
</comment>
<keyword id="KW-0648">Protein biosynthesis</keyword>
<keyword id="KW-1185">Reference proteome</keyword>
<keyword id="KW-0808">Transferase</keyword>
<feature type="initiator methionine" description="Removed" evidence="1">
    <location>
        <position position="1"/>
    </location>
</feature>
<feature type="chain" id="PRO_0000082961" description="Methionyl-tRNA formyltransferase">
    <location>
        <begin position="2"/>
        <end position="315"/>
    </location>
</feature>
<feature type="region of interest" description="N-terminal domain">
    <location>
        <begin position="2"/>
        <end position="189"/>
    </location>
</feature>
<feature type="region of interest" description="C-terminal domain">
    <location>
        <begin position="210"/>
        <end position="315"/>
    </location>
</feature>
<feature type="binding site" evidence="2">
    <location>
        <begin position="113"/>
        <end position="116"/>
    </location>
    <ligand>
        <name>(6S)-5,6,7,8-tetrahydrofolate</name>
        <dbReference type="ChEBI" id="CHEBI:57453"/>
    </ligand>
</feature>
<evidence type="ECO:0000250" key="1"/>
<evidence type="ECO:0000255" key="2">
    <source>
        <dbReference type="HAMAP-Rule" id="MF_00182"/>
    </source>
</evidence>